<proteinExistence type="evidence at transcript level"/>
<keyword id="KW-0025">Alternative splicing</keyword>
<keyword id="KW-0067">ATP-binding</keyword>
<keyword id="KW-0347">Helicase</keyword>
<keyword id="KW-0378">Hydrolase</keyword>
<keyword id="KW-0547">Nucleotide-binding</keyword>
<keyword id="KW-1185">Reference proteome</keyword>
<keyword id="KW-0694">RNA-binding</keyword>
<dbReference type="EC" id="3.6.4.13"/>
<dbReference type="EMBL" id="AP005312">
    <property type="protein sequence ID" value="BAD25848.1"/>
    <property type="status" value="ALT_SEQ"/>
    <property type="molecule type" value="Genomic_DNA"/>
</dbReference>
<dbReference type="EMBL" id="AP008215">
    <property type="protein sequence ID" value="BAF24981.2"/>
    <property type="status" value="ALT_SEQ"/>
    <property type="molecule type" value="Genomic_DNA"/>
</dbReference>
<dbReference type="EMBL" id="AP014965">
    <property type="status" value="NOT_ANNOTATED_CDS"/>
    <property type="molecule type" value="Genomic_DNA"/>
</dbReference>
<dbReference type="EMBL" id="AK103385">
    <property type="status" value="NOT_ANNOTATED_CDS"/>
    <property type="molecule type" value="mRNA"/>
</dbReference>
<dbReference type="RefSeq" id="XP_015651427.1">
    <property type="nucleotide sequence ID" value="XM_015795941.1"/>
</dbReference>
<dbReference type="SMR" id="Q6H601"/>
<dbReference type="FunCoup" id="Q6H601">
    <property type="interactions" value="331"/>
</dbReference>
<dbReference type="STRING" id="39947.Q6H601"/>
<dbReference type="PaxDb" id="39947-Q6H601"/>
<dbReference type="KEGG" id="dosa:Os09g0383400"/>
<dbReference type="eggNOG" id="KOG0333">
    <property type="taxonomic scope" value="Eukaryota"/>
</dbReference>
<dbReference type="HOGENOM" id="CLU_003041_1_8_1"/>
<dbReference type="InParanoid" id="Q6H601"/>
<dbReference type="OrthoDB" id="10256233at2759"/>
<dbReference type="Proteomes" id="UP000000763">
    <property type="component" value="Chromosome 9"/>
</dbReference>
<dbReference type="Proteomes" id="UP000059680">
    <property type="component" value="Chromosome 9"/>
</dbReference>
<dbReference type="GO" id="GO:0009507">
    <property type="term" value="C:chloroplast"/>
    <property type="evidence" value="ECO:0000318"/>
    <property type="project" value="GO_Central"/>
</dbReference>
<dbReference type="GO" id="GO:0005524">
    <property type="term" value="F:ATP binding"/>
    <property type="evidence" value="ECO:0007669"/>
    <property type="project" value="UniProtKB-KW"/>
</dbReference>
<dbReference type="GO" id="GO:0016887">
    <property type="term" value="F:ATP hydrolysis activity"/>
    <property type="evidence" value="ECO:0007669"/>
    <property type="project" value="RHEA"/>
</dbReference>
<dbReference type="GO" id="GO:0003729">
    <property type="term" value="F:mRNA binding"/>
    <property type="evidence" value="ECO:0000318"/>
    <property type="project" value="GO_Central"/>
</dbReference>
<dbReference type="GO" id="GO:0003724">
    <property type="term" value="F:RNA helicase activity"/>
    <property type="evidence" value="ECO:0000318"/>
    <property type="project" value="GO_Central"/>
</dbReference>
<dbReference type="CDD" id="cd00268">
    <property type="entry name" value="DEADc"/>
    <property type="match status" value="1"/>
</dbReference>
<dbReference type="CDD" id="cd18787">
    <property type="entry name" value="SF2_C_DEAD"/>
    <property type="match status" value="1"/>
</dbReference>
<dbReference type="Gene3D" id="3.40.50.300">
    <property type="entry name" value="P-loop containing nucleotide triphosphate hydrolases"/>
    <property type="match status" value="2"/>
</dbReference>
<dbReference type="InterPro" id="IPR011545">
    <property type="entry name" value="DEAD/DEAH_box_helicase_dom"/>
</dbReference>
<dbReference type="InterPro" id="IPR014001">
    <property type="entry name" value="Helicase_ATP-bd"/>
</dbReference>
<dbReference type="InterPro" id="IPR001650">
    <property type="entry name" value="Helicase_C-like"/>
</dbReference>
<dbReference type="InterPro" id="IPR027417">
    <property type="entry name" value="P-loop_NTPase"/>
</dbReference>
<dbReference type="PANTHER" id="PTHR47958">
    <property type="entry name" value="ATP-DEPENDENT RNA HELICASE DBP3"/>
    <property type="match status" value="1"/>
</dbReference>
<dbReference type="Pfam" id="PF00270">
    <property type="entry name" value="DEAD"/>
    <property type="match status" value="1"/>
</dbReference>
<dbReference type="Pfam" id="PF00271">
    <property type="entry name" value="Helicase_C"/>
    <property type="match status" value="1"/>
</dbReference>
<dbReference type="SMART" id="SM00487">
    <property type="entry name" value="DEXDc"/>
    <property type="match status" value="1"/>
</dbReference>
<dbReference type="SMART" id="SM00490">
    <property type="entry name" value="HELICc"/>
    <property type="match status" value="1"/>
</dbReference>
<dbReference type="SUPFAM" id="SSF52540">
    <property type="entry name" value="P-loop containing nucleoside triphosphate hydrolases"/>
    <property type="match status" value="1"/>
</dbReference>
<dbReference type="PROSITE" id="PS51192">
    <property type="entry name" value="HELICASE_ATP_BIND_1"/>
    <property type="match status" value="1"/>
</dbReference>
<dbReference type="PROSITE" id="PS51194">
    <property type="entry name" value="HELICASE_CTER"/>
    <property type="match status" value="1"/>
</dbReference>
<dbReference type="PROSITE" id="PS51195">
    <property type="entry name" value="Q_MOTIF"/>
    <property type="match status" value="1"/>
</dbReference>
<name>RH22_ORYSJ</name>
<gene>
    <name type="ordered locus">Os09g0383400</name>
    <name type="ordered locus">LOC_Os09g21520</name>
    <name type="ORF">P0505H05.40</name>
</gene>
<organism>
    <name type="scientific">Oryza sativa subsp. japonica</name>
    <name type="common">Rice</name>
    <dbReference type="NCBI Taxonomy" id="39947"/>
    <lineage>
        <taxon>Eukaryota</taxon>
        <taxon>Viridiplantae</taxon>
        <taxon>Streptophyta</taxon>
        <taxon>Embryophyta</taxon>
        <taxon>Tracheophyta</taxon>
        <taxon>Spermatophyta</taxon>
        <taxon>Magnoliopsida</taxon>
        <taxon>Liliopsida</taxon>
        <taxon>Poales</taxon>
        <taxon>Poaceae</taxon>
        <taxon>BOP clade</taxon>
        <taxon>Oryzoideae</taxon>
        <taxon>Oryzeae</taxon>
        <taxon>Oryzinae</taxon>
        <taxon>Oryza</taxon>
        <taxon>Oryza sativa</taxon>
    </lineage>
</organism>
<sequence>MALHHLRHAPLALRLARLPRLAPSPPPPAARLLLLLAPSQHPAPPWRLLSRPRALATAAAEADDAGAGGNGDGDGFFSEESTSWESLGVSDRLASALHGAGLARPSLVQAACIPHVLTTNDVIVAAETGSGKTHGYLVPLIEKLCSKSISAEDGNSQDVTSGSPNIALVLCPNVMLCEQVVRMANSLVDESGEPLKSAAAVCGPKGWPTVRPDILVATPAALLNYLFDYDPEKRRRERFLRNVKFIVFDEADMLLCGSFENQVIRLIHMLRFDEKLLSRMEDSGKEISLGDTNEYREDSDSQSAELSADDEENEDGLVQHRPVNVENAHIGAHKKDWRRVRKVYRRSKQYVFVAATLPQSGKKTAGGVLKRMFPNAVWVSGAYLHRHNPRLERRWIEVTADTQVSALLDAVKYGLKNEVHDTKLGPNRTMVFTNTVDAANSVSDILQRVGVPCILYHRDSSLEERAKNLQSFRENGGVLVCTDAAARGLDVPNVSHVIQAEFAACAVDFLHRVGRTARAGQSGIVTSLYTEANRDLVRAVRQAEELAQPVEKAFSRKRSFRNKLKKQALHKSTALLS</sequence>
<protein>
    <recommendedName>
        <fullName>DEAD-box ATP-dependent RNA helicase 22</fullName>
        <ecNumber>3.6.4.13</ecNumber>
    </recommendedName>
</protein>
<accession>Q6H601</accession>
<evidence type="ECO:0000255" key="1">
    <source>
        <dbReference type="PROSITE-ProRule" id="PRU00541"/>
    </source>
</evidence>
<evidence type="ECO:0000255" key="2">
    <source>
        <dbReference type="PROSITE-ProRule" id="PRU00542"/>
    </source>
</evidence>
<evidence type="ECO:0000256" key="3">
    <source>
        <dbReference type="SAM" id="MobiDB-lite"/>
    </source>
</evidence>
<evidence type="ECO:0000303" key="4">
    <source>
    </source>
</evidence>
<evidence type="ECO:0000305" key="5"/>
<comment type="catalytic activity">
    <reaction>
        <text>ATP + H2O = ADP + phosphate + H(+)</text>
        <dbReference type="Rhea" id="RHEA:13065"/>
        <dbReference type="ChEBI" id="CHEBI:15377"/>
        <dbReference type="ChEBI" id="CHEBI:15378"/>
        <dbReference type="ChEBI" id="CHEBI:30616"/>
        <dbReference type="ChEBI" id="CHEBI:43474"/>
        <dbReference type="ChEBI" id="CHEBI:456216"/>
        <dbReference type="EC" id="3.6.4.13"/>
    </reaction>
</comment>
<comment type="alternative products">
    <event type="alternative splicing"/>
    <isoform>
        <id>Q6H601-1</id>
        <name>1</name>
        <sequence type="displayed"/>
    </isoform>
    <isoform>
        <id>Q6H601-2</id>
        <name>2</name>
        <sequence type="described" ref="VSP_024170 VSP_024171"/>
    </isoform>
</comment>
<comment type="domain">
    <text>The Q motif is unique to and characteristic of the DEAD box family of RNA helicases and controls ATP binding and hydrolysis.</text>
</comment>
<comment type="similarity">
    <text evidence="5">Belongs to the DEAD box helicase family.</text>
</comment>
<comment type="sequence caution" evidence="5">
    <conflict type="frameshift">
        <sequence resource="EMBL" id="AK103385"/>
    </conflict>
</comment>
<comment type="sequence caution" evidence="5">
    <conflict type="erroneous gene model prediction">
        <sequence resource="EMBL-CDS" id="BAD25848"/>
    </conflict>
</comment>
<comment type="sequence caution" evidence="5">
    <conflict type="erroneous gene model prediction">
        <sequence resource="EMBL-CDS" id="BAF24981"/>
    </conflict>
</comment>
<feature type="chain" id="PRO_0000282511" description="DEAD-box ATP-dependent RNA helicase 22">
    <location>
        <begin position="1"/>
        <end position="577"/>
    </location>
</feature>
<feature type="domain" description="Helicase ATP-binding" evidence="1">
    <location>
        <begin position="113"/>
        <end position="375"/>
    </location>
</feature>
<feature type="domain" description="Helicase C-terminal" evidence="2">
    <location>
        <begin position="407"/>
        <end position="568"/>
    </location>
</feature>
<feature type="region of interest" description="Disordered" evidence="3">
    <location>
        <begin position="288"/>
        <end position="317"/>
    </location>
</feature>
<feature type="short sequence motif" description="Q motif">
    <location>
        <begin position="82"/>
        <end position="110"/>
    </location>
</feature>
<feature type="short sequence motif" description="DEAD box">
    <location>
        <begin position="249"/>
        <end position="252"/>
    </location>
</feature>
<feature type="binding site" evidence="1">
    <location>
        <begin position="126"/>
        <end position="133"/>
    </location>
    <ligand>
        <name>ATP</name>
        <dbReference type="ChEBI" id="CHEBI:30616"/>
    </ligand>
</feature>
<feature type="splice variant" id="VSP_024170" description="In isoform 2." evidence="4">
    <original>A</original>
    <variation>V</variation>
    <location>
        <position position="500"/>
    </location>
</feature>
<feature type="splice variant" id="VSP_024171" description="In isoform 2." evidence="4">
    <location>
        <begin position="501"/>
        <end position="577"/>
    </location>
</feature>
<reference key="1">
    <citation type="journal article" date="2005" name="Nature">
        <title>The map-based sequence of the rice genome.</title>
        <authorList>
            <consortium name="International rice genome sequencing project (IRGSP)"/>
        </authorList>
    </citation>
    <scope>NUCLEOTIDE SEQUENCE [LARGE SCALE GENOMIC DNA]</scope>
    <source>
        <strain>cv. Nipponbare</strain>
    </source>
</reference>
<reference key="2">
    <citation type="journal article" date="2008" name="Nucleic Acids Res.">
        <title>The rice annotation project database (RAP-DB): 2008 update.</title>
        <authorList>
            <consortium name="The rice annotation project (RAP)"/>
        </authorList>
    </citation>
    <scope>GENOME REANNOTATION</scope>
    <source>
        <strain>cv. Nipponbare</strain>
    </source>
</reference>
<reference key="3">
    <citation type="journal article" date="2013" name="Rice">
        <title>Improvement of the Oryza sativa Nipponbare reference genome using next generation sequence and optical map data.</title>
        <authorList>
            <person name="Kawahara Y."/>
            <person name="de la Bastide M."/>
            <person name="Hamilton J.P."/>
            <person name="Kanamori H."/>
            <person name="McCombie W.R."/>
            <person name="Ouyang S."/>
            <person name="Schwartz D.C."/>
            <person name="Tanaka T."/>
            <person name="Wu J."/>
            <person name="Zhou S."/>
            <person name="Childs K.L."/>
            <person name="Davidson R.M."/>
            <person name="Lin H."/>
            <person name="Quesada-Ocampo L."/>
            <person name="Vaillancourt B."/>
            <person name="Sakai H."/>
            <person name="Lee S.S."/>
            <person name="Kim J."/>
            <person name="Numa H."/>
            <person name="Itoh T."/>
            <person name="Buell C.R."/>
            <person name="Matsumoto T."/>
        </authorList>
    </citation>
    <scope>GENOME REANNOTATION</scope>
    <source>
        <strain>cv. Nipponbare</strain>
    </source>
</reference>
<reference key="4">
    <citation type="journal article" date="2003" name="Science">
        <title>Collection, mapping, and annotation of over 28,000 cDNA clones from japonica rice.</title>
        <authorList>
            <consortium name="The rice full-length cDNA consortium"/>
        </authorList>
    </citation>
    <scope>NUCLEOTIDE SEQUENCE [LARGE SCALE MRNA] OF 3-577 (ISOFORM 2)</scope>
    <source>
        <strain>cv. Nipponbare</strain>
    </source>
</reference>